<proteinExistence type="inferred from homology"/>
<reference key="1">
    <citation type="journal article" date="2009" name="Appl. Environ. Microbiol.">
        <title>Genome analysis of the meat starter culture bacterium Staphylococcus carnosus TM300.</title>
        <authorList>
            <person name="Rosenstein R."/>
            <person name="Nerz C."/>
            <person name="Biswas L."/>
            <person name="Resch A."/>
            <person name="Raddatz G."/>
            <person name="Schuster S.C."/>
            <person name="Goetz F."/>
        </authorList>
    </citation>
    <scope>NUCLEOTIDE SEQUENCE [LARGE SCALE GENOMIC DNA]</scope>
    <source>
        <strain>TM300</strain>
    </source>
</reference>
<gene>
    <name evidence="1" type="primary">aroC</name>
    <name type="ordered locus">Sca_1100</name>
</gene>
<dbReference type="EC" id="4.2.3.5" evidence="1"/>
<dbReference type="EMBL" id="AM295250">
    <property type="protein sequence ID" value="CAL28008.1"/>
    <property type="molecule type" value="Genomic_DNA"/>
</dbReference>
<dbReference type="RefSeq" id="WP_015900349.1">
    <property type="nucleotide sequence ID" value="NC_012121.1"/>
</dbReference>
<dbReference type="SMR" id="B9DNV2"/>
<dbReference type="GeneID" id="93793526"/>
<dbReference type="KEGG" id="sca:SCA_1100"/>
<dbReference type="eggNOG" id="COG0082">
    <property type="taxonomic scope" value="Bacteria"/>
</dbReference>
<dbReference type="HOGENOM" id="CLU_034547_2_0_9"/>
<dbReference type="OrthoDB" id="9771806at2"/>
<dbReference type="BioCyc" id="SCAR396513:SCA_RS05510-MONOMER"/>
<dbReference type="UniPathway" id="UPA00053">
    <property type="reaction ID" value="UER00090"/>
</dbReference>
<dbReference type="Proteomes" id="UP000000444">
    <property type="component" value="Chromosome"/>
</dbReference>
<dbReference type="GO" id="GO:0005829">
    <property type="term" value="C:cytosol"/>
    <property type="evidence" value="ECO:0007669"/>
    <property type="project" value="TreeGrafter"/>
</dbReference>
<dbReference type="GO" id="GO:0004107">
    <property type="term" value="F:chorismate synthase activity"/>
    <property type="evidence" value="ECO:0007669"/>
    <property type="project" value="UniProtKB-UniRule"/>
</dbReference>
<dbReference type="GO" id="GO:0010181">
    <property type="term" value="F:FMN binding"/>
    <property type="evidence" value="ECO:0007669"/>
    <property type="project" value="TreeGrafter"/>
</dbReference>
<dbReference type="GO" id="GO:0008652">
    <property type="term" value="P:amino acid biosynthetic process"/>
    <property type="evidence" value="ECO:0007669"/>
    <property type="project" value="UniProtKB-KW"/>
</dbReference>
<dbReference type="GO" id="GO:0009073">
    <property type="term" value="P:aromatic amino acid family biosynthetic process"/>
    <property type="evidence" value="ECO:0007669"/>
    <property type="project" value="UniProtKB-KW"/>
</dbReference>
<dbReference type="GO" id="GO:0009423">
    <property type="term" value="P:chorismate biosynthetic process"/>
    <property type="evidence" value="ECO:0007669"/>
    <property type="project" value="UniProtKB-UniRule"/>
</dbReference>
<dbReference type="CDD" id="cd07304">
    <property type="entry name" value="Chorismate_synthase"/>
    <property type="match status" value="1"/>
</dbReference>
<dbReference type="FunFam" id="3.60.150.10:FF:000002">
    <property type="entry name" value="Chorismate synthase"/>
    <property type="match status" value="1"/>
</dbReference>
<dbReference type="Gene3D" id="3.60.150.10">
    <property type="entry name" value="Chorismate synthase AroC"/>
    <property type="match status" value="1"/>
</dbReference>
<dbReference type="HAMAP" id="MF_00300">
    <property type="entry name" value="Chorismate_synth"/>
    <property type="match status" value="1"/>
</dbReference>
<dbReference type="InterPro" id="IPR000453">
    <property type="entry name" value="Chorismate_synth"/>
</dbReference>
<dbReference type="InterPro" id="IPR035904">
    <property type="entry name" value="Chorismate_synth_AroC_sf"/>
</dbReference>
<dbReference type="InterPro" id="IPR020541">
    <property type="entry name" value="Chorismate_synthase_CS"/>
</dbReference>
<dbReference type="NCBIfam" id="TIGR00033">
    <property type="entry name" value="aroC"/>
    <property type="match status" value="1"/>
</dbReference>
<dbReference type="NCBIfam" id="NF003793">
    <property type="entry name" value="PRK05382.1"/>
    <property type="match status" value="1"/>
</dbReference>
<dbReference type="PANTHER" id="PTHR21085">
    <property type="entry name" value="CHORISMATE SYNTHASE"/>
    <property type="match status" value="1"/>
</dbReference>
<dbReference type="PANTHER" id="PTHR21085:SF0">
    <property type="entry name" value="CHORISMATE SYNTHASE"/>
    <property type="match status" value="1"/>
</dbReference>
<dbReference type="Pfam" id="PF01264">
    <property type="entry name" value="Chorismate_synt"/>
    <property type="match status" value="1"/>
</dbReference>
<dbReference type="PIRSF" id="PIRSF001456">
    <property type="entry name" value="Chorismate_synth"/>
    <property type="match status" value="1"/>
</dbReference>
<dbReference type="SUPFAM" id="SSF103263">
    <property type="entry name" value="Chorismate synthase, AroC"/>
    <property type="match status" value="1"/>
</dbReference>
<dbReference type="PROSITE" id="PS00787">
    <property type="entry name" value="CHORISMATE_SYNTHASE_1"/>
    <property type="match status" value="1"/>
</dbReference>
<dbReference type="PROSITE" id="PS00788">
    <property type="entry name" value="CHORISMATE_SYNTHASE_2"/>
    <property type="match status" value="1"/>
</dbReference>
<dbReference type="PROSITE" id="PS00789">
    <property type="entry name" value="CHORISMATE_SYNTHASE_3"/>
    <property type="match status" value="1"/>
</dbReference>
<evidence type="ECO:0000255" key="1">
    <source>
        <dbReference type="HAMAP-Rule" id="MF_00300"/>
    </source>
</evidence>
<accession>B9DNV2</accession>
<keyword id="KW-0028">Amino-acid biosynthesis</keyword>
<keyword id="KW-0057">Aromatic amino acid biosynthesis</keyword>
<keyword id="KW-0274">FAD</keyword>
<keyword id="KW-0285">Flavoprotein</keyword>
<keyword id="KW-0288">FMN</keyword>
<keyword id="KW-0456">Lyase</keyword>
<keyword id="KW-0521">NADP</keyword>
<keyword id="KW-1185">Reference proteome</keyword>
<protein>
    <recommendedName>
        <fullName evidence="1">Chorismate synthase</fullName>
        <shortName evidence="1">CS</shortName>
        <ecNumber evidence="1">4.2.3.5</ecNumber>
    </recommendedName>
    <alternativeName>
        <fullName evidence="1">5-enolpyruvylshikimate-3-phosphate phospholyase</fullName>
    </alternativeName>
</protein>
<feature type="chain" id="PRO_1000132787" description="Chorismate synthase">
    <location>
        <begin position="1"/>
        <end position="388"/>
    </location>
</feature>
<feature type="binding site" evidence="1">
    <location>
        <position position="39"/>
    </location>
    <ligand>
        <name>NADP(+)</name>
        <dbReference type="ChEBI" id="CHEBI:58349"/>
    </ligand>
</feature>
<feature type="binding site" evidence="1">
    <location>
        <position position="45"/>
    </location>
    <ligand>
        <name>NADP(+)</name>
        <dbReference type="ChEBI" id="CHEBI:58349"/>
    </ligand>
</feature>
<feature type="binding site" evidence="1">
    <location>
        <begin position="132"/>
        <end position="134"/>
    </location>
    <ligand>
        <name>FMN</name>
        <dbReference type="ChEBI" id="CHEBI:58210"/>
    </ligand>
</feature>
<feature type="binding site" evidence="1">
    <location>
        <begin position="251"/>
        <end position="252"/>
    </location>
    <ligand>
        <name>FMN</name>
        <dbReference type="ChEBI" id="CHEBI:58210"/>
    </ligand>
</feature>
<feature type="binding site" evidence="1">
    <location>
        <position position="296"/>
    </location>
    <ligand>
        <name>FMN</name>
        <dbReference type="ChEBI" id="CHEBI:58210"/>
    </ligand>
</feature>
<feature type="binding site" evidence="1">
    <location>
        <begin position="311"/>
        <end position="315"/>
    </location>
    <ligand>
        <name>FMN</name>
        <dbReference type="ChEBI" id="CHEBI:58210"/>
    </ligand>
</feature>
<feature type="binding site" evidence="1">
    <location>
        <position position="337"/>
    </location>
    <ligand>
        <name>FMN</name>
        <dbReference type="ChEBI" id="CHEBI:58210"/>
    </ligand>
</feature>
<organism>
    <name type="scientific">Staphylococcus carnosus (strain TM300)</name>
    <dbReference type="NCBI Taxonomy" id="396513"/>
    <lineage>
        <taxon>Bacteria</taxon>
        <taxon>Bacillati</taxon>
        <taxon>Bacillota</taxon>
        <taxon>Bacilli</taxon>
        <taxon>Bacillales</taxon>
        <taxon>Staphylococcaceae</taxon>
        <taxon>Staphylococcus</taxon>
    </lineage>
</organism>
<comment type="function">
    <text evidence="1">Catalyzes the anti-1,4-elimination of the C-3 phosphate and the C-6 proR hydrogen from 5-enolpyruvylshikimate-3-phosphate (EPSP) to yield chorismate, which is the branch point compound that serves as the starting substrate for the three terminal pathways of aromatic amino acid biosynthesis. This reaction introduces a second double bond into the aromatic ring system.</text>
</comment>
<comment type="catalytic activity">
    <reaction evidence="1">
        <text>5-O-(1-carboxyvinyl)-3-phosphoshikimate = chorismate + phosphate</text>
        <dbReference type="Rhea" id="RHEA:21020"/>
        <dbReference type="ChEBI" id="CHEBI:29748"/>
        <dbReference type="ChEBI" id="CHEBI:43474"/>
        <dbReference type="ChEBI" id="CHEBI:57701"/>
        <dbReference type="EC" id="4.2.3.5"/>
    </reaction>
</comment>
<comment type="cofactor">
    <cofactor evidence="1">
        <name>FMNH2</name>
        <dbReference type="ChEBI" id="CHEBI:57618"/>
    </cofactor>
    <text evidence="1">Reduced FMN (FMNH(2)).</text>
</comment>
<comment type="pathway">
    <text evidence="1">Metabolic intermediate biosynthesis; chorismate biosynthesis; chorismate from D-erythrose 4-phosphate and phosphoenolpyruvate: step 7/7.</text>
</comment>
<comment type="subunit">
    <text evidence="1">Homotetramer.</text>
</comment>
<comment type="similarity">
    <text evidence="1">Belongs to the chorismate synthase family.</text>
</comment>
<sequence>MRFLTSGESHGPQLTVIIEGVPANLKITAEDINEEMFKRQGGYGRGRRMKIEKDGVEIVSGVRNGYTLGSPVTIVVTNDDFTHWRNIMGVAPISEEEQEQMKRTISKPRPGHADLIGGIKYNHRDLRNVLERSSARETAARVAVGAVCKILLKQLGINVLSRVVEIGGIKDDTDYDLDTIKKHEDSNDVRVVNEDIAQEIRAKIDQAKKDGDSLGGVVQVIVKNMPVGIGSYVHYDRKLDGRIAQGVVGINAFKGVSFGEGFKAAEKPGSQIQDPILYNDEEGYTRASNHLGGLEGGMSNGMPIVVNGVMKPIPTLYKPLASVDIETKEPFKATIERSDSCAVPAASIVCEHAVAFEITKTLLEEFQSNYMEQLQQQVDERRLRNIEF</sequence>
<name>AROC_STACT</name>